<sequence>MAHWTIEQEEAINARNSNLLVAAAAGSGKTTVLVERIIQLVLRDRIDIDRLLIVTFTQAAAGEMRERINAAFFKELEKGREDGHLRRQLYLLNRSSISTIHAFCSDVVRQHFHLVNIDPHFRIADSTETELIKMEVLEELLDGEYEKGNDGFLDLVEAFGSNKDDKPLEALILRLHSFIQSHPQPLSWLEEKIDNLALGEDNWAENPWASELSQQIKIELSAAQDILNQALKLSNKAGGPRGYLEAIESDQKWVELLLKAADQGLPVLYSCLQQLSFTRLGRVSRDVDENLKNQVKILRDESKKILNAINSLLGRDPLEYLQDLNEIYSLMKYLGEIIQSFAEIYQEKKREKGIVDFNDLEHLALQILSNEAVAREYRDYYSYLFIDEYQDSNLVQETILNYIKKEDNLFMVGDVKQSIYRFRLADPSLFLEKQKSYPLQDGSVNRRVDLNKNFRSHPEILNAVNYIFRHLMSEELGEIDYDEKSYLYPGLNTGQELKYQEIDKASSQEGKEKENTAKRVEICILENNPDLITKLEENETEEREIPGEAENDFIERIIEMDNTEIEALLIAQKIRQLIQEDIYDPELQCMRKIEYRDMVILLRATRNSAGIFMEQLSAEGIPVYADASSGYFDTLELNLFINLLRLIDNKRQDIALLSVMRSPIGGFSIDDFIKIRTKLIPRREKQPYSFYEAMEFYMEDNNDDLKDRLVFFIQRLKEWELESRIMALDEFMGKLFMDTGYYYYAGAMPGGGQRQANLRILLHRAREFQKSSFKGLFSFIKYIEKIKSSGSDMGNACIIGENDNVVRIMSIHKSKGLEFPVVILGGLGKNFNIRDSNENVLLHRKLGIGPRYINTQLRTYHDTIARLAIKNRIKLENLAEEMRILYVACTRPQEKLIMVGTTRQLESAWRRWSQPVNSYNQSRARSFLDWLIPIIMRHKKEGQYLREIAGGDWDREILWEDESRWKVKLISPWQLTAEEIRKKEEKYEWERLLEQGGYSCPSAESEEIIKRLNWKYPYQEAENIPAKLSVSQVSQISSGYLEDGAADTFLTRVPAFLSGEKDKKTRLSPADKGSIVHLVMQNIDYRRVSREDSINQQLGEMVEREILTSEQLAVVEVNKIWRFFQTKLGQRVLQAKWLFREAPFNLLIAASEVFPALESQEELLIQGIIDLYFYEGEDIVLLDFKSDIVHHKSEEEILAPYRVQLKLYKRALENITDHRVKESYLYFFDLNRAIRV</sequence>
<gene>
    <name evidence="1" type="primary">addA</name>
    <name type="ordered locus">Swol_1146</name>
</gene>
<comment type="function">
    <text evidence="1">The heterodimer acts as both an ATP-dependent DNA helicase and an ATP-dependent, dual-direction single-stranded exonuclease. Recognizes the chi site generating a DNA molecule suitable for the initiation of homologous recombination. The AddA nuclease domain is required for chi fragment generation; this subunit has the helicase and 3' -&gt; 5' nuclease activities.</text>
</comment>
<comment type="catalytic activity">
    <reaction evidence="1">
        <text>Couples ATP hydrolysis with the unwinding of duplex DNA by translocating in the 3'-5' direction.</text>
        <dbReference type="EC" id="5.6.2.4"/>
    </reaction>
</comment>
<comment type="catalytic activity">
    <reaction evidence="1">
        <text>ATP + H2O = ADP + phosphate + H(+)</text>
        <dbReference type="Rhea" id="RHEA:13065"/>
        <dbReference type="ChEBI" id="CHEBI:15377"/>
        <dbReference type="ChEBI" id="CHEBI:15378"/>
        <dbReference type="ChEBI" id="CHEBI:30616"/>
        <dbReference type="ChEBI" id="CHEBI:43474"/>
        <dbReference type="ChEBI" id="CHEBI:456216"/>
        <dbReference type="EC" id="5.6.2.4"/>
    </reaction>
</comment>
<comment type="cofactor">
    <cofactor evidence="1">
        <name>Mg(2+)</name>
        <dbReference type="ChEBI" id="CHEBI:18420"/>
    </cofactor>
</comment>
<comment type="subunit">
    <text evidence="1">Heterodimer of AddA and AddB/RexB.</text>
</comment>
<comment type="similarity">
    <text evidence="1">Belongs to the helicase family. AddA subfamily.</text>
</comment>
<accession>Q0AXU8</accession>
<reference key="1">
    <citation type="journal article" date="2010" name="Environ. Microbiol.">
        <title>The genome of Syntrophomonas wolfei: new insights into syntrophic metabolism and biohydrogen production.</title>
        <authorList>
            <person name="Sieber J.R."/>
            <person name="Sims D.R."/>
            <person name="Han C."/>
            <person name="Kim E."/>
            <person name="Lykidis A."/>
            <person name="Lapidus A.L."/>
            <person name="McDonnald E."/>
            <person name="Rohlin L."/>
            <person name="Culley D.E."/>
            <person name="Gunsalus R."/>
            <person name="McInerney M.J."/>
        </authorList>
    </citation>
    <scope>NUCLEOTIDE SEQUENCE [LARGE SCALE GENOMIC DNA]</scope>
    <source>
        <strain>DSM 2245B / Goettingen</strain>
    </source>
</reference>
<name>ADDA_SYNWW</name>
<evidence type="ECO:0000255" key="1">
    <source>
        <dbReference type="HAMAP-Rule" id="MF_01451"/>
    </source>
</evidence>
<organism>
    <name type="scientific">Syntrophomonas wolfei subsp. wolfei (strain DSM 2245B / Goettingen)</name>
    <dbReference type="NCBI Taxonomy" id="335541"/>
    <lineage>
        <taxon>Bacteria</taxon>
        <taxon>Bacillati</taxon>
        <taxon>Bacillota</taxon>
        <taxon>Clostridia</taxon>
        <taxon>Eubacteriales</taxon>
        <taxon>Syntrophomonadaceae</taxon>
        <taxon>Syntrophomonas</taxon>
    </lineage>
</organism>
<dbReference type="EC" id="3.1.-.-" evidence="1"/>
<dbReference type="EC" id="5.6.2.4" evidence="1"/>
<dbReference type="EMBL" id="CP000448">
    <property type="protein sequence ID" value="ABI68456.1"/>
    <property type="molecule type" value="Genomic_DNA"/>
</dbReference>
<dbReference type="RefSeq" id="WP_011640560.1">
    <property type="nucleotide sequence ID" value="NC_008346.1"/>
</dbReference>
<dbReference type="SMR" id="Q0AXU8"/>
<dbReference type="STRING" id="335541.Swol_1146"/>
<dbReference type="KEGG" id="swo:Swol_1146"/>
<dbReference type="eggNOG" id="COG1074">
    <property type="taxonomic scope" value="Bacteria"/>
</dbReference>
<dbReference type="HOGENOM" id="CLU_001114_3_1_9"/>
<dbReference type="OrthoDB" id="9810135at2"/>
<dbReference type="Proteomes" id="UP000001968">
    <property type="component" value="Chromosome"/>
</dbReference>
<dbReference type="GO" id="GO:0005829">
    <property type="term" value="C:cytosol"/>
    <property type="evidence" value="ECO:0007669"/>
    <property type="project" value="TreeGrafter"/>
</dbReference>
<dbReference type="GO" id="GO:0033202">
    <property type="term" value="C:DNA helicase complex"/>
    <property type="evidence" value="ECO:0007669"/>
    <property type="project" value="TreeGrafter"/>
</dbReference>
<dbReference type="GO" id="GO:0043138">
    <property type="term" value="F:3'-5' DNA helicase activity"/>
    <property type="evidence" value="ECO:0007669"/>
    <property type="project" value="UniProtKB-UniRule"/>
</dbReference>
<dbReference type="GO" id="GO:0008408">
    <property type="term" value="F:3'-5' exonuclease activity"/>
    <property type="evidence" value="ECO:0007669"/>
    <property type="project" value="UniProtKB-UniRule"/>
</dbReference>
<dbReference type="GO" id="GO:0005524">
    <property type="term" value="F:ATP binding"/>
    <property type="evidence" value="ECO:0007669"/>
    <property type="project" value="UniProtKB-UniRule"/>
</dbReference>
<dbReference type="GO" id="GO:0016887">
    <property type="term" value="F:ATP hydrolysis activity"/>
    <property type="evidence" value="ECO:0007669"/>
    <property type="project" value="RHEA"/>
</dbReference>
<dbReference type="GO" id="GO:0003690">
    <property type="term" value="F:double-stranded DNA binding"/>
    <property type="evidence" value="ECO:0007669"/>
    <property type="project" value="UniProtKB-UniRule"/>
</dbReference>
<dbReference type="GO" id="GO:0000724">
    <property type="term" value="P:double-strand break repair via homologous recombination"/>
    <property type="evidence" value="ECO:0007669"/>
    <property type="project" value="UniProtKB-UniRule"/>
</dbReference>
<dbReference type="CDD" id="cd17932">
    <property type="entry name" value="DEXQc_UvrD"/>
    <property type="match status" value="1"/>
</dbReference>
<dbReference type="FunFam" id="3.40.50.300:FF:001236">
    <property type="entry name" value="ATP-dependent helicase/nuclease subunit A"/>
    <property type="match status" value="1"/>
</dbReference>
<dbReference type="Gene3D" id="3.90.320.10">
    <property type="match status" value="1"/>
</dbReference>
<dbReference type="Gene3D" id="3.40.50.300">
    <property type="entry name" value="P-loop containing nucleotide triphosphate hydrolases"/>
    <property type="match status" value="4"/>
</dbReference>
<dbReference type="HAMAP" id="MF_01451">
    <property type="entry name" value="AddA"/>
    <property type="match status" value="1"/>
</dbReference>
<dbReference type="InterPro" id="IPR014152">
    <property type="entry name" value="AddA"/>
</dbReference>
<dbReference type="InterPro" id="IPR014017">
    <property type="entry name" value="DNA_helicase_UvrD-like_C"/>
</dbReference>
<dbReference type="InterPro" id="IPR000212">
    <property type="entry name" value="DNA_helicase_UvrD/REP"/>
</dbReference>
<dbReference type="InterPro" id="IPR027417">
    <property type="entry name" value="P-loop_NTPase"/>
</dbReference>
<dbReference type="InterPro" id="IPR011604">
    <property type="entry name" value="PDDEXK-like_dom_sf"/>
</dbReference>
<dbReference type="InterPro" id="IPR038726">
    <property type="entry name" value="PDDEXK_AddAB-type"/>
</dbReference>
<dbReference type="InterPro" id="IPR011335">
    <property type="entry name" value="Restrct_endonuc-II-like"/>
</dbReference>
<dbReference type="InterPro" id="IPR014016">
    <property type="entry name" value="UvrD-like_ATP-bd"/>
</dbReference>
<dbReference type="PANTHER" id="PTHR11070:SF48">
    <property type="entry name" value="ATP-DEPENDENT HELICASE_NUCLEASE SUBUNIT A"/>
    <property type="match status" value="1"/>
</dbReference>
<dbReference type="PANTHER" id="PTHR11070">
    <property type="entry name" value="UVRD / RECB / PCRA DNA HELICASE FAMILY MEMBER"/>
    <property type="match status" value="1"/>
</dbReference>
<dbReference type="Pfam" id="PF12705">
    <property type="entry name" value="PDDEXK_1"/>
    <property type="match status" value="1"/>
</dbReference>
<dbReference type="Pfam" id="PF00580">
    <property type="entry name" value="UvrD-helicase"/>
    <property type="match status" value="1"/>
</dbReference>
<dbReference type="Pfam" id="PF13361">
    <property type="entry name" value="UvrD_C"/>
    <property type="match status" value="1"/>
</dbReference>
<dbReference type="SUPFAM" id="SSF52540">
    <property type="entry name" value="P-loop containing nucleoside triphosphate hydrolases"/>
    <property type="match status" value="1"/>
</dbReference>
<dbReference type="SUPFAM" id="SSF52980">
    <property type="entry name" value="Restriction endonuclease-like"/>
    <property type="match status" value="1"/>
</dbReference>
<dbReference type="PROSITE" id="PS51198">
    <property type="entry name" value="UVRD_HELICASE_ATP_BIND"/>
    <property type="match status" value="1"/>
</dbReference>
<dbReference type="PROSITE" id="PS51217">
    <property type="entry name" value="UVRD_HELICASE_CTER"/>
    <property type="match status" value="1"/>
</dbReference>
<feature type="chain" id="PRO_0000379359" description="ATP-dependent helicase/nuclease subunit A">
    <location>
        <begin position="1"/>
        <end position="1236"/>
    </location>
</feature>
<feature type="domain" description="UvrD-like helicase ATP-binding" evidence="1">
    <location>
        <begin position="2"/>
        <end position="457"/>
    </location>
</feature>
<feature type="domain" description="UvrD-like helicase C-terminal" evidence="1">
    <location>
        <begin position="515"/>
        <end position="816"/>
    </location>
</feature>
<feature type="binding site" evidence="1">
    <location>
        <begin position="23"/>
        <end position="30"/>
    </location>
    <ligand>
        <name>ATP</name>
        <dbReference type="ChEBI" id="CHEBI:30616"/>
    </ligand>
</feature>
<keyword id="KW-0067">ATP-binding</keyword>
<keyword id="KW-0227">DNA damage</keyword>
<keyword id="KW-0234">DNA repair</keyword>
<keyword id="KW-0238">DNA-binding</keyword>
<keyword id="KW-0269">Exonuclease</keyword>
<keyword id="KW-0347">Helicase</keyword>
<keyword id="KW-0378">Hydrolase</keyword>
<keyword id="KW-0413">Isomerase</keyword>
<keyword id="KW-0540">Nuclease</keyword>
<keyword id="KW-0547">Nucleotide-binding</keyword>
<keyword id="KW-1185">Reference proteome</keyword>
<proteinExistence type="inferred from homology"/>
<protein>
    <recommendedName>
        <fullName evidence="1">ATP-dependent helicase/nuclease subunit A</fullName>
        <ecNumber evidence="1">3.1.-.-</ecNumber>
        <ecNumber evidence="1">5.6.2.4</ecNumber>
    </recommendedName>
    <alternativeName>
        <fullName evidence="1">ATP-dependent helicase/nuclease AddA</fullName>
    </alternativeName>
    <alternativeName>
        <fullName evidence="1">DNA 3'-5' helicase AddA</fullName>
    </alternativeName>
</protein>